<evidence type="ECO:0000250" key="1"/>
<evidence type="ECO:0000269" key="2">
    <source>
    </source>
</evidence>
<evidence type="ECO:0000305" key="3"/>
<comment type="function">
    <text evidence="2">Catalyzes the conversion of GDP-D-mannose to GDP-4-dehydro-6-deoxy-D-mannose.</text>
</comment>
<comment type="catalytic activity">
    <reaction evidence="2">
        <text>GDP-alpha-D-mannose = GDP-4-dehydro-alpha-D-rhamnose + H2O</text>
        <dbReference type="Rhea" id="RHEA:23820"/>
        <dbReference type="ChEBI" id="CHEBI:15377"/>
        <dbReference type="ChEBI" id="CHEBI:57527"/>
        <dbReference type="ChEBI" id="CHEBI:57964"/>
        <dbReference type="EC" id="4.2.1.47"/>
    </reaction>
</comment>
<comment type="cofactor">
    <cofactor>
        <name>NADP(+)</name>
        <dbReference type="ChEBI" id="CHEBI:58349"/>
    </cofactor>
</comment>
<comment type="pathway">
    <text>Nucleotide-sugar biosynthesis; GDP-L-fucose biosynthesis via de novo pathway; GDP-L-fucose from GDP-alpha-D-mannose: step 1/2.</text>
</comment>
<comment type="subunit">
    <text evidence="1">Homotetramer.</text>
</comment>
<comment type="tissue specificity">
    <text evidence="2">Expressed in roots,stipules and pollen just before anthesis. Primarily localized to the root meristem and columella root cap. Not expressed in emerging lateral roots.</text>
</comment>
<comment type="similarity">
    <text evidence="3">Belongs to the NAD(P)-dependent epimerase/dehydratase family. GDP-mannose 4,6-dehydratase subfamily.</text>
</comment>
<name>GMD1_ARATH</name>
<gene>
    <name type="primary">GMD1</name>
    <name type="ordered locus">At5g66280</name>
    <name type="ORF">K1L20.6</name>
</gene>
<reference key="1">
    <citation type="submission" date="1999-10" db="EMBL/GenBank/DDBJ databases">
        <title>The GMD1 gene of Arabidopsis thaliana encodes an isoform of GDP-D-mannose 4,6-dehydratase that is expressed in roots and pollen.</title>
        <authorList>
            <person name="Bonin C.P."/>
            <person name="Reiter W.-D."/>
        </authorList>
    </citation>
    <scope>NUCLEOTIDE SEQUENCE [MRNA]</scope>
    <source>
        <strain>cv. Columbia</strain>
    </source>
</reference>
<reference key="2">
    <citation type="journal article" date="2000" name="DNA Res.">
        <title>Structural analysis of Arabidopsis thaliana chromosome 5. X. Sequence features of the regions of 3,076,755 bp covered by sixty P1 and TAC clones.</title>
        <authorList>
            <person name="Sato S."/>
            <person name="Nakamura Y."/>
            <person name="Kaneko T."/>
            <person name="Katoh T."/>
            <person name="Asamizu E."/>
            <person name="Kotani H."/>
            <person name="Tabata S."/>
        </authorList>
    </citation>
    <scope>NUCLEOTIDE SEQUENCE [LARGE SCALE GENOMIC DNA]</scope>
    <source>
        <strain>cv. Columbia</strain>
    </source>
</reference>
<reference key="3">
    <citation type="journal article" date="2017" name="Plant J.">
        <title>Araport11: a complete reannotation of the Arabidopsis thaliana reference genome.</title>
        <authorList>
            <person name="Cheng C.Y."/>
            <person name="Krishnakumar V."/>
            <person name="Chan A.P."/>
            <person name="Thibaud-Nissen F."/>
            <person name="Schobel S."/>
            <person name="Town C.D."/>
        </authorList>
    </citation>
    <scope>GENOME REANNOTATION</scope>
    <source>
        <strain>cv. Columbia</strain>
    </source>
</reference>
<reference key="4">
    <citation type="submission" date="2006-10" db="EMBL/GenBank/DDBJ databases">
        <title>Arabidopsis ORF Clones.</title>
        <authorList>
            <person name="Quinitio C."/>
            <person name="Chen H."/>
            <person name="Kim C.J."/>
            <person name="Shinn P."/>
            <person name="Ecker J.R."/>
        </authorList>
    </citation>
    <scope>NUCLEOTIDE SEQUENCE [LARGE SCALE MRNA]</scope>
</reference>
<reference key="5">
    <citation type="journal article" date="2003" name="Plant Physiol.">
        <title>The GMD1 and GMD2 genes of Arabidopsis encode isoforms of GDP-D-mannose 4,6-dehydratase with cell type-specific expression patterns.</title>
        <authorList>
            <person name="Bonin C.P."/>
            <person name="Freshour G."/>
            <person name="Hahn M.G."/>
            <person name="Vanzin G.F."/>
            <person name="Reiter W.D."/>
        </authorList>
    </citation>
    <scope>NUCLEOTIDE SEQUENCE [GENOMIC DNA]</scope>
    <scope>TISSUE SPECIFICITY</scope>
    <scope>FUNCTION</scope>
    <scope>CATALYTIC ACTIVITY</scope>
</reference>
<proteinExistence type="evidence at protein level"/>
<accession>Q9SNY3</accession>
<accession>Q058I8</accession>
<protein>
    <recommendedName>
        <fullName>GDP-mannose 4,6 dehydratase 1</fullName>
        <ecNumber>4.2.1.47</ecNumber>
    </recommendedName>
    <alternativeName>
        <fullName>GDP-D-mannose dehydratase 1</fullName>
        <shortName>GMD 1</shortName>
    </alternativeName>
</protein>
<organism>
    <name type="scientific">Arabidopsis thaliana</name>
    <name type="common">Mouse-ear cress</name>
    <dbReference type="NCBI Taxonomy" id="3702"/>
    <lineage>
        <taxon>Eukaryota</taxon>
        <taxon>Viridiplantae</taxon>
        <taxon>Streptophyta</taxon>
        <taxon>Embryophyta</taxon>
        <taxon>Tracheophyta</taxon>
        <taxon>Spermatophyta</taxon>
        <taxon>Magnoliopsida</taxon>
        <taxon>eudicotyledons</taxon>
        <taxon>Gunneridae</taxon>
        <taxon>Pentapetalae</taxon>
        <taxon>rosids</taxon>
        <taxon>malvids</taxon>
        <taxon>Brassicales</taxon>
        <taxon>Brassicaceae</taxon>
        <taxon>Camelineae</taxon>
        <taxon>Arabidopsis</taxon>
    </lineage>
</organism>
<keyword id="KW-0456">Lyase</keyword>
<keyword id="KW-0521">NADP</keyword>
<keyword id="KW-1185">Reference proteome</keyword>
<sequence>MASRSLNGDSDIVKPRKIALVTGITGQDGSYLTEFLLEKGYEVHGLIRRSSNFNTQRLNHIYVDPHNVNKALMKLHYGDLSDASSLRRWLDVIKPDEVYNLAAQSHVAVSFEIPDYTADVVATGALRLLEAVRSHNIDNGRAIKYYQAGSSEMFGSTPPPQSETTPFHPRSPYAASKCAAHWYTVNYREAYGLYACNGILFNHESPRRGENFVTRKITRALGRIKVGLQTKLFLGNIQASRDWGFAGDYVEAMWLMLQQEKPDDYVVATEESHTVKEFLDVSFGYVGLNWKDHVEIDKRYFRPTEVDNLKGDASKAKEMLGWKPKVGFEKLVKMMVDEDLELAKREKVLADAGYMDAQQQP</sequence>
<dbReference type="EC" id="4.2.1.47"/>
<dbReference type="EMBL" id="AF195140">
    <property type="protein sequence ID" value="AAF07199.1"/>
    <property type="molecule type" value="mRNA"/>
</dbReference>
<dbReference type="EMBL" id="AB022211">
    <property type="protein sequence ID" value="BAB10707.1"/>
    <property type="molecule type" value="Genomic_DNA"/>
</dbReference>
<dbReference type="EMBL" id="CP002688">
    <property type="protein sequence ID" value="AED98194.1"/>
    <property type="molecule type" value="Genomic_DNA"/>
</dbReference>
<dbReference type="EMBL" id="BT029230">
    <property type="protein sequence ID" value="ABJ98562.1"/>
    <property type="molecule type" value="mRNA"/>
</dbReference>
<dbReference type="RefSeq" id="NP_201429.1">
    <property type="nucleotide sequence ID" value="NM_126026.3"/>
</dbReference>
<dbReference type="SMR" id="Q9SNY3"/>
<dbReference type="BioGRID" id="22002">
    <property type="interactions" value="6"/>
</dbReference>
<dbReference type="FunCoup" id="Q9SNY3">
    <property type="interactions" value="2069"/>
</dbReference>
<dbReference type="IntAct" id="Q9SNY3">
    <property type="interactions" value="2"/>
</dbReference>
<dbReference type="STRING" id="3702.Q9SNY3"/>
<dbReference type="iPTMnet" id="Q9SNY3"/>
<dbReference type="PaxDb" id="3702-AT5G66280.1"/>
<dbReference type="ProteomicsDB" id="248434"/>
<dbReference type="EnsemblPlants" id="AT5G66280.1">
    <property type="protein sequence ID" value="AT5G66280.1"/>
    <property type="gene ID" value="AT5G66280"/>
</dbReference>
<dbReference type="GeneID" id="836760"/>
<dbReference type="Gramene" id="AT5G66280.1">
    <property type="protein sequence ID" value="AT5G66280.1"/>
    <property type="gene ID" value="AT5G66280"/>
</dbReference>
<dbReference type="KEGG" id="ath:AT5G66280"/>
<dbReference type="Araport" id="AT5G66280"/>
<dbReference type="TAIR" id="AT5G66280">
    <property type="gene designation" value="GMD1"/>
</dbReference>
<dbReference type="eggNOG" id="KOG1372">
    <property type="taxonomic scope" value="Eukaryota"/>
</dbReference>
<dbReference type="HOGENOM" id="CLU_007383_14_0_1"/>
<dbReference type="InParanoid" id="Q9SNY3"/>
<dbReference type="OMA" id="HWQTVNY"/>
<dbReference type="OrthoDB" id="10253554at2759"/>
<dbReference type="PhylomeDB" id="Q9SNY3"/>
<dbReference type="BioCyc" id="ARA:AT5G66280-MONOMER"/>
<dbReference type="BRENDA" id="4.2.1.47">
    <property type="organism ID" value="399"/>
</dbReference>
<dbReference type="UniPathway" id="UPA00128">
    <property type="reaction ID" value="UER00190"/>
</dbReference>
<dbReference type="PRO" id="PR:Q9SNY3"/>
<dbReference type="Proteomes" id="UP000006548">
    <property type="component" value="Chromosome 5"/>
</dbReference>
<dbReference type="ExpressionAtlas" id="Q9SNY3">
    <property type="expression patterns" value="baseline and differential"/>
</dbReference>
<dbReference type="GO" id="GO:0009536">
    <property type="term" value="C:plastid"/>
    <property type="evidence" value="ECO:0007005"/>
    <property type="project" value="TAIR"/>
</dbReference>
<dbReference type="GO" id="GO:0008446">
    <property type="term" value="F:GDP-mannose 4,6-dehydratase activity"/>
    <property type="evidence" value="ECO:0007669"/>
    <property type="project" value="UniProtKB-EC"/>
</dbReference>
<dbReference type="GO" id="GO:0042351">
    <property type="term" value="P:'de novo' GDP-L-fucose biosynthetic process"/>
    <property type="evidence" value="ECO:0007669"/>
    <property type="project" value="UniProtKB-UniPathway"/>
</dbReference>
<dbReference type="CDD" id="cd05260">
    <property type="entry name" value="GDP_MD_SDR_e"/>
    <property type="match status" value="1"/>
</dbReference>
<dbReference type="FunFam" id="3.40.50.720:FF:000102">
    <property type="entry name" value="GDP-mannose 4,6-dehydratase"/>
    <property type="match status" value="1"/>
</dbReference>
<dbReference type="Gene3D" id="3.40.50.720">
    <property type="entry name" value="NAD(P)-binding Rossmann-like Domain"/>
    <property type="match status" value="1"/>
</dbReference>
<dbReference type="Gene3D" id="3.90.25.10">
    <property type="entry name" value="UDP-galactose 4-epimerase, domain 1"/>
    <property type="match status" value="1"/>
</dbReference>
<dbReference type="HAMAP" id="MF_00955">
    <property type="entry name" value="GDP_Man_dehydratase"/>
    <property type="match status" value="1"/>
</dbReference>
<dbReference type="InterPro" id="IPR006368">
    <property type="entry name" value="GDP_Man_deHydtase"/>
</dbReference>
<dbReference type="InterPro" id="IPR016040">
    <property type="entry name" value="NAD(P)-bd_dom"/>
</dbReference>
<dbReference type="InterPro" id="IPR036291">
    <property type="entry name" value="NAD(P)-bd_dom_sf"/>
</dbReference>
<dbReference type="NCBIfam" id="TIGR01472">
    <property type="entry name" value="gmd"/>
    <property type="match status" value="1"/>
</dbReference>
<dbReference type="PANTHER" id="PTHR43715:SF4">
    <property type="entry name" value="GDP-MANNOSE 4,6 DEHYDRATASE 1"/>
    <property type="match status" value="1"/>
</dbReference>
<dbReference type="PANTHER" id="PTHR43715">
    <property type="entry name" value="GDP-MANNOSE 4,6-DEHYDRATASE"/>
    <property type="match status" value="1"/>
</dbReference>
<dbReference type="Pfam" id="PF16363">
    <property type="entry name" value="GDP_Man_Dehyd"/>
    <property type="match status" value="1"/>
</dbReference>
<dbReference type="SUPFAM" id="SSF51735">
    <property type="entry name" value="NAD(P)-binding Rossmann-fold domains"/>
    <property type="match status" value="1"/>
</dbReference>
<feature type="chain" id="PRO_0000201710" description="GDP-mannose 4,6 dehydratase 1">
    <location>
        <begin position="1"/>
        <end position="361"/>
    </location>
</feature>
<feature type="active site" evidence="1">
    <location>
        <position position="150"/>
    </location>
</feature>
<feature type="active site" description="Nucleophile" evidence="1">
    <location>
        <position position="152"/>
    </location>
</feature>
<feature type="active site" description="Nucleophile" evidence="1">
    <location>
        <position position="173"/>
    </location>
</feature>
<feature type="binding site" evidence="1">
    <location>
        <begin position="23"/>
        <end position="28"/>
    </location>
    <ligand>
        <name>NADP(+)</name>
        <dbReference type="ChEBI" id="CHEBI:58349"/>
    </ligand>
</feature>
<feature type="binding site" evidence="1">
    <location>
        <begin position="79"/>
        <end position="80"/>
    </location>
    <ligand>
        <name>NADP(+)</name>
        <dbReference type="ChEBI" id="CHEBI:58349"/>
    </ligand>
</feature>
<feature type="binding site" evidence="1">
    <location>
        <begin position="101"/>
        <end position="105"/>
    </location>
    <ligand>
        <name>NADP(+)</name>
        <dbReference type="ChEBI" id="CHEBI:58349"/>
    </ligand>
</feature>
<feature type="binding site" evidence="1">
    <location>
        <position position="116"/>
    </location>
    <ligand>
        <name>NADP(+)</name>
        <dbReference type="ChEBI" id="CHEBI:58349"/>
    </ligand>
</feature>
<feature type="binding site" evidence="1">
    <location>
        <position position="177"/>
    </location>
    <ligand>
        <name>NADP(+)</name>
        <dbReference type="ChEBI" id="CHEBI:58349"/>
    </ligand>
</feature>
<feature type="binding site" evidence="1">
    <location>
        <position position="203"/>
    </location>
    <ligand>
        <name>NADP(+)</name>
        <dbReference type="ChEBI" id="CHEBI:58349"/>
    </ligand>
</feature>
<feature type="binding site" evidence="1">
    <location>
        <position position="208"/>
    </location>
    <ligand>
        <name>NADP(+)</name>
        <dbReference type="ChEBI" id="CHEBI:58349"/>
    </ligand>
</feature>